<keyword id="KW-0489">Methyltransferase</keyword>
<keyword id="KW-0949">S-adenosyl-L-methionine</keyword>
<keyword id="KW-0808">Transferase</keyword>
<keyword id="KW-0819">tRNA processing</keyword>
<sequence>MSAAFDPSSYATQLDAKVARLRELLAPFGAPEPAVFDSPREHYRLRAEFRLWREDGQRHYAMFAQGDKHKAILIDDFPIASQRINALMPRLKAAWQASEELGNRLFQVEFLTTLAGDAMITMCYHRPLDEAWEVEARQLAEALGVSVIGRSKGKRLVIGRDYAIEELDVAGRVFSYRQPEGAFTQPNGAVNQKMLSWAFEAIGEREDDLLELYCGNGNFTLPLATRVRQVLATEISKTSVNAALSNLDENAVDNVRLVRLSAEELTQALNEVRPFRRLEGIDLKSYEFGTVFVDPPRAGMDPDTCELTRRFERILYISCNPETLAANIAQLQDTHRIERCALFDQFPYTHHMESGVLLVRR</sequence>
<proteinExistence type="inferred from homology"/>
<organism>
    <name type="scientific">Pseudomonas putida (strain GB-1)</name>
    <dbReference type="NCBI Taxonomy" id="76869"/>
    <lineage>
        <taxon>Bacteria</taxon>
        <taxon>Pseudomonadati</taxon>
        <taxon>Pseudomonadota</taxon>
        <taxon>Gammaproteobacteria</taxon>
        <taxon>Pseudomonadales</taxon>
        <taxon>Pseudomonadaceae</taxon>
        <taxon>Pseudomonas</taxon>
    </lineage>
</organism>
<comment type="function">
    <text evidence="1">Dual-specificity methyltransferase that catalyzes the formation of 5-methyluridine at position 54 (m5U54) in all tRNAs, and that of position 341 (m5U341) in tmRNA (transfer-mRNA).</text>
</comment>
<comment type="catalytic activity">
    <reaction evidence="1">
        <text>uridine(54) in tRNA + S-adenosyl-L-methionine = 5-methyluridine(54) in tRNA + S-adenosyl-L-homocysteine + H(+)</text>
        <dbReference type="Rhea" id="RHEA:42712"/>
        <dbReference type="Rhea" id="RHEA-COMP:10167"/>
        <dbReference type="Rhea" id="RHEA-COMP:10193"/>
        <dbReference type="ChEBI" id="CHEBI:15378"/>
        <dbReference type="ChEBI" id="CHEBI:57856"/>
        <dbReference type="ChEBI" id="CHEBI:59789"/>
        <dbReference type="ChEBI" id="CHEBI:65315"/>
        <dbReference type="ChEBI" id="CHEBI:74447"/>
        <dbReference type="EC" id="2.1.1.35"/>
    </reaction>
</comment>
<comment type="catalytic activity">
    <reaction evidence="1">
        <text>uridine(341) in tmRNA + S-adenosyl-L-methionine = 5-methyluridine(341) in tmRNA + S-adenosyl-L-homocysteine + H(+)</text>
        <dbReference type="Rhea" id="RHEA:43612"/>
        <dbReference type="Rhea" id="RHEA-COMP:10630"/>
        <dbReference type="Rhea" id="RHEA-COMP:10631"/>
        <dbReference type="ChEBI" id="CHEBI:15378"/>
        <dbReference type="ChEBI" id="CHEBI:57856"/>
        <dbReference type="ChEBI" id="CHEBI:59789"/>
        <dbReference type="ChEBI" id="CHEBI:65315"/>
        <dbReference type="ChEBI" id="CHEBI:74447"/>
    </reaction>
</comment>
<comment type="similarity">
    <text evidence="1">Belongs to the class I-like SAM-binding methyltransferase superfamily. RNA M5U methyltransferase family. TrmA subfamily.</text>
</comment>
<feature type="chain" id="PRO_1000084038" description="tRNA/tmRNA (uracil-C(5))-methyltransferase">
    <location>
        <begin position="1"/>
        <end position="361"/>
    </location>
</feature>
<feature type="active site" description="Nucleophile" evidence="1">
    <location>
        <position position="319"/>
    </location>
</feature>
<feature type="active site" description="Proton acceptor" evidence="1">
    <location>
        <position position="353"/>
    </location>
</feature>
<feature type="binding site" evidence="1">
    <location>
        <position position="185"/>
    </location>
    <ligand>
        <name>S-adenosyl-L-methionine</name>
        <dbReference type="ChEBI" id="CHEBI:59789"/>
    </ligand>
</feature>
<feature type="binding site" evidence="1">
    <location>
        <position position="213"/>
    </location>
    <ligand>
        <name>S-adenosyl-L-methionine</name>
        <dbReference type="ChEBI" id="CHEBI:59789"/>
    </ligand>
</feature>
<feature type="binding site" evidence="1">
    <location>
        <position position="218"/>
    </location>
    <ligand>
        <name>S-adenosyl-L-methionine</name>
        <dbReference type="ChEBI" id="CHEBI:59789"/>
    </ligand>
</feature>
<feature type="binding site" evidence="1">
    <location>
        <position position="234"/>
    </location>
    <ligand>
        <name>S-adenosyl-L-methionine</name>
        <dbReference type="ChEBI" id="CHEBI:59789"/>
    </ligand>
</feature>
<feature type="binding site" evidence="1">
    <location>
        <position position="294"/>
    </location>
    <ligand>
        <name>S-adenosyl-L-methionine</name>
        <dbReference type="ChEBI" id="CHEBI:59789"/>
    </ligand>
</feature>
<protein>
    <recommendedName>
        <fullName evidence="1">tRNA/tmRNA (uracil-C(5))-methyltransferase</fullName>
        <ecNumber evidence="1">2.1.1.-</ecNumber>
        <ecNumber evidence="1">2.1.1.35</ecNumber>
    </recommendedName>
    <alternativeName>
        <fullName evidence="1">tRNA (uracil(54)-C(5))-methyltransferase</fullName>
    </alternativeName>
    <alternativeName>
        <fullName evidence="1">tRNA(m5U54)-methyltransferase</fullName>
        <shortName evidence="1">RUMT</shortName>
    </alternativeName>
    <alternativeName>
        <fullName evidence="1">tmRNA (uracil(341)-C(5))-methyltransferase</fullName>
    </alternativeName>
</protein>
<reference key="1">
    <citation type="submission" date="2008-01" db="EMBL/GenBank/DDBJ databases">
        <title>Complete sequence of Pseudomonas putida GB-1.</title>
        <authorList>
            <consortium name="US DOE Joint Genome Institute"/>
            <person name="Copeland A."/>
            <person name="Lucas S."/>
            <person name="Lapidus A."/>
            <person name="Barry K."/>
            <person name="Glavina del Rio T."/>
            <person name="Dalin E."/>
            <person name="Tice H."/>
            <person name="Pitluck S."/>
            <person name="Bruce D."/>
            <person name="Goodwin L."/>
            <person name="Chertkov O."/>
            <person name="Brettin T."/>
            <person name="Detter J.C."/>
            <person name="Han C."/>
            <person name="Kuske C.R."/>
            <person name="Schmutz J."/>
            <person name="Larimer F."/>
            <person name="Land M."/>
            <person name="Hauser L."/>
            <person name="Kyrpides N."/>
            <person name="Kim E."/>
            <person name="McCarthy J.K."/>
            <person name="Richardson P."/>
        </authorList>
    </citation>
    <scope>NUCLEOTIDE SEQUENCE [LARGE SCALE GENOMIC DNA]</scope>
    <source>
        <strain>GB-1</strain>
    </source>
</reference>
<dbReference type="EC" id="2.1.1.-" evidence="1"/>
<dbReference type="EC" id="2.1.1.35" evidence="1"/>
<dbReference type="EMBL" id="CP000926">
    <property type="protein sequence ID" value="ABZ00536.1"/>
    <property type="molecule type" value="Genomic_DNA"/>
</dbReference>
<dbReference type="RefSeq" id="WP_012274186.1">
    <property type="nucleotide sequence ID" value="NC_010322.1"/>
</dbReference>
<dbReference type="SMR" id="B0KHR5"/>
<dbReference type="KEGG" id="ppg:PputGB1_4649"/>
<dbReference type="eggNOG" id="COG2265">
    <property type="taxonomic scope" value="Bacteria"/>
</dbReference>
<dbReference type="HOGENOM" id="CLU_043022_0_0_6"/>
<dbReference type="Proteomes" id="UP000002157">
    <property type="component" value="Chromosome"/>
</dbReference>
<dbReference type="GO" id="GO:0005829">
    <property type="term" value="C:cytosol"/>
    <property type="evidence" value="ECO:0007669"/>
    <property type="project" value="TreeGrafter"/>
</dbReference>
<dbReference type="GO" id="GO:0019843">
    <property type="term" value="F:rRNA binding"/>
    <property type="evidence" value="ECO:0007669"/>
    <property type="project" value="TreeGrafter"/>
</dbReference>
<dbReference type="GO" id="GO:0030697">
    <property type="term" value="F:tRNA (uracil(54)-C5)-methyltransferase activity, S-adenosyl methionine-dependent"/>
    <property type="evidence" value="ECO:0007669"/>
    <property type="project" value="UniProtKB-UniRule"/>
</dbReference>
<dbReference type="GO" id="GO:0000049">
    <property type="term" value="F:tRNA binding"/>
    <property type="evidence" value="ECO:0007669"/>
    <property type="project" value="TreeGrafter"/>
</dbReference>
<dbReference type="GO" id="GO:0030488">
    <property type="term" value="P:tRNA methylation"/>
    <property type="evidence" value="ECO:0007669"/>
    <property type="project" value="UniProtKB-UniRule"/>
</dbReference>
<dbReference type="CDD" id="cd02440">
    <property type="entry name" value="AdoMet_MTases"/>
    <property type="match status" value="1"/>
</dbReference>
<dbReference type="FunFam" id="2.40.50.1070:FF:000001">
    <property type="entry name" value="tRNA/tmRNA (uracil-C(5))-methyltransferase"/>
    <property type="match status" value="1"/>
</dbReference>
<dbReference type="FunFam" id="3.40.50.150:FF:000012">
    <property type="entry name" value="tRNA/tmRNA (uracil-C(5))-methyltransferase"/>
    <property type="match status" value="1"/>
</dbReference>
<dbReference type="Gene3D" id="2.40.50.1070">
    <property type="match status" value="1"/>
</dbReference>
<dbReference type="Gene3D" id="3.40.50.150">
    <property type="entry name" value="Vaccinia Virus protein VP39"/>
    <property type="match status" value="1"/>
</dbReference>
<dbReference type="HAMAP" id="MF_01011">
    <property type="entry name" value="RNA_methyltr_TrmA"/>
    <property type="match status" value="1"/>
</dbReference>
<dbReference type="InterPro" id="IPR030390">
    <property type="entry name" value="MeTrfase_TrmA_AS"/>
</dbReference>
<dbReference type="InterPro" id="IPR030391">
    <property type="entry name" value="MeTrfase_TrmA_CS"/>
</dbReference>
<dbReference type="InterPro" id="IPR029063">
    <property type="entry name" value="SAM-dependent_MTases_sf"/>
</dbReference>
<dbReference type="InterPro" id="IPR011869">
    <property type="entry name" value="TrmA_MeTrfase"/>
</dbReference>
<dbReference type="InterPro" id="IPR010280">
    <property type="entry name" value="U5_MeTrfase_fam"/>
</dbReference>
<dbReference type="NCBIfam" id="TIGR02143">
    <property type="entry name" value="trmA_only"/>
    <property type="match status" value="1"/>
</dbReference>
<dbReference type="PANTHER" id="PTHR47790">
    <property type="entry name" value="TRNA/TMRNA (URACIL-C(5))-METHYLTRANSFERASE"/>
    <property type="match status" value="1"/>
</dbReference>
<dbReference type="PANTHER" id="PTHR47790:SF2">
    <property type="entry name" value="TRNA_TMRNA (URACIL-C(5))-METHYLTRANSFERASE"/>
    <property type="match status" value="1"/>
</dbReference>
<dbReference type="Pfam" id="PF05958">
    <property type="entry name" value="tRNA_U5-meth_tr"/>
    <property type="match status" value="1"/>
</dbReference>
<dbReference type="SUPFAM" id="SSF53335">
    <property type="entry name" value="S-adenosyl-L-methionine-dependent methyltransferases"/>
    <property type="match status" value="1"/>
</dbReference>
<dbReference type="PROSITE" id="PS51687">
    <property type="entry name" value="SAM_MT_RNA_M5U"/>
    <property type="match status" value="1"/>
</dbReference>
<dbReference type="PROSITE" id="PS01230">
    <property type="entry name" value="TRMA_1"/>
    <property type="match status" value="1"/>
</dbReference>
<dbReference type="PROSITE" id="PS01231">
    <property type="entry name" value="TRMA_2"/>
    <property type="match status" value="1"/>
</dbReference>
<accession>B0KHR5</accession>
<evidence type="ECO:0000255" key="1">
    <source>
        <dbReference type="HAMAP-Rule" id="MF_01011"/>
    </source>
</evidence>
<name>TRMA_PSEPG</name>
<gene>
    <name evidence="1" type="primary">trmA</name>
    <name type="ordered locus">PputGB1_4649</name>
</gene>